<reference key="1">
    <citation type="journal article" date="2005" name="Proc. Natl. Acad. Sci. U.S.A.">
        <title>The psychrophilic lifestyle as revealed by the genome sequence of Colwellia psychrerythraea 34H through genomic and proteomic analyses.</title>
        <authorList>
            <person name="Methe B.A."/>
            <person name="Nelson K.E."/>
            <person name="Deming J.W."/>
            <person name="Momen B."/>
            <person name="Melamud E."/>
            <person name="Zhang X."/>
            <person name="Moult J."/>
            <person name="Madupu R."/>
            <person name="Nelson W.C."/>
            <person name="Dodson R.J."/>
            <person name="Brinkac L.M."/>
            <person name="Daugherty S.C."/>
            <person name="Durkin A.S."/>
            <person name="DeBoy R.T."/>
            <person name="Kolonay J.F."/>
            <person name="Sullivan S.A."/>
            <person name="Zhou L."/>
            <person name="Davidsen T.M."/>
            <person name="Wu M."/>
            <person name="Huston A.L."/>
            <person name="Lewis M."/>
            <person name="Weaver B."/>
            <person name="Weidman J.F."/>
            <person name="Khouri H."/>
            <person name="Utterback T.R."/>
            <person name="Feldblyum T.V."/>
            <person name="Fraser C.M."/>
        </authorList>
    </citation>
    <scope>NUCLEOTIDE SEQUENCE [LARGE SCALE GENOMIC DNA]</scope>
    <source>
        <strain>34H / ATCC BAA-681</strain>
    </source>
</reference>
<evidence type="ECO:0000255" key="1">
    <source>
        <dbReference type="HAMAP-Rule" id="MF_00051"/>
    </source>
</evidence>
<dbReference type="EC" id="2.1.2.1" evidence="1"/>
<dbReference type="EMBL" id="CP000083">
    <property type="protein sequence ID" value="AAZ24531.1"/>
    <property type="molecule type" value="Genomic_DNA"/>
</dbReference>
<dbReference type="RefSeq" id="WP_011044775.1">
    <property type="nucleotide sequence ID" value="NC_003910.7"/>
</dbReference>
<dbReference type="SMR" id="Q47WY2"/>
<dbReference type="STRING" id="167879.CPS_4031"/>
<dbReference type="KEGG" id="cps:CPS_4031"/>
<dbReference type="eggNOG" id="COG0112">
    <property type="taxonomic scope" value="Bacteria"/>
</dbReference>
<dbReference type="HOGENOM" id="CLU_022477_2_1_6"/>
<dbReference type="UniPathway" id="UPA00193"/>
<dbReference type="UniPathway" id="UPA00288">
    <property type="reaction ID" value="UER01023"/>
</dbReference>
<dbReference type="Proteomes" id="UP000000547">
    <property type="component" value="Chromosome"/>
</dbReference>
<dbReference type="GO" id="GO:0005829">
    <property type="term" value="C:cytosol"/>
    <property type="evidence" value="ECO:0007669"/>
    <property type="project" value="TreeGrafter"/>
</dbReference>
<dbReference type="GO" id="GO:0004372">
    <property type="term" value="F:glycine hydroxymethyltransferase activity"/>
    <property type="evidence" value="ECO:0007669"/>
    <property type="project" value="UniProtKB-UniRule"/>
</dbReference>
<dbReference type="GO" id="GO:0030170">
    <property type="term" value="F:pyridoxal phosphate binding"/>
    <property type="evidence" value="ECO:0007669"/>
    <property type="project" value="UniProtKB-UniRule"/>
</dbReference>
<dbReference type="GO" id="GO:0019264">
    <property type="term" value="P:glycine biosynthetic process from serine"/>
    <property type="evidence" value="ECO:0007669"/>
    <property type="project" value="UniProtKB-UniRule"/>
</dbReference>
<dbReference type="GO" id="GO:0035999">
    <property type="term" value="P:tetrahydrofolate interconversion"/>
    <property type="evidence" value="ECO:0007669"/>
    <property type="project" value="UniProtKB-UniRule"/>
</dbReference>
<dbReference type="CDD" id="cd00378">
    <property type="entry name" value="SHMT"/>
    <property type="match status" value="1"/>
</dbReference>
<dbReference type="FunFam" id="3.40.640.10:FF:000001">
    <property type="entry name" value="Serine hydroxymethyltransferase"/>
    <property type="match status" value="1"/>
</dbReference>
<dbReference type="FunFam" id="3.90.1150.10:FF:000003">
    <property type="entry name" value="Serine hydroxymethyltransferase"/>
    <property type="match status" value="1"/>
</dbReference>
<dbReference type="Gene3D" id="3.90.1150.10">
    <property type="entry name" value="Aspartate Aminotransferase, domain 1"/>
    <property type="match status" value="1"/>
</dbReference>
<dbReference type="Gene3D" id="3.40.640.10">
    <property type="entry name" value="Type I PLP-dependent aspartate aminotransferase-like (Major domain)"/>
    <property type="match status" value="1"/>
</dbReference>
<dbReference type="HAMAP" id="MF_00051">
    <property type="entry name" value="SHMT"/>
    <property type="match status" value="1"/>
</dbReference>
<dbReference type="InterPro" id="IPR015424">
    <property type="entry name" value="PyrdxlP-dep_Trfase"/>
</dbReference>
<dbReference type="InterPro" id="IPR015421">
    <property type="entry name" value="PyrdxlP-dep_Trfase_major"/>
</dbReference>
<dbReference type="InterPro" id="IPR015422">
    <property type="entry name" value="PyrdxlP-dep_Trfase_small"/>
</dbReference>
<dbReference type="InterPro" id="IPR001085">
    <property type="entry name" value="Ser_HO-MeTrfase"/>
</dbReference>
<dbReference type="InterPro" id="IPR049943">
    <property type="entry name" value="Ser_HO-MeTrfase-like"/>
</dbReference>
<dbReference type="InterPro" id="IPR019798">
    <property type="entry name" value="Ser_HO-MeTrfase_PLP_BS"/>
</dbReference>
<dbReference type="InterPro" id="IPR039429">
    <property type="entry name" value="SHMT-like_dom"/>
</dbReference>
<dbReference type="NCBIfam" id="NF000586">
    <property type="entry name" value="PRK00011.1"/>
    <property type="match status" value="1"/>
</dbReference>
<dbReference type="PANTHER" id="PTHR11680">
    <property type="entry name" value="SERINE HYDROXYMETHYLTRANSFERASE"/>
    <property type="match status" value="1"/>
</dbReference>
<dbReference type="PANTHER" id="PTHR11680:SF50">
    <property type="entry name" value="SERINE HYDROXYMETHYLTRANSFERASE"/>
    <property type="match status" value="1"/>
</dbReference>
<dbReference type="Pfam" id="PF00464">
    <property type="entry name" value="SHMT"/>
    <property type="match status" value="1"/>
</dbReference>
<dbReference type="PIRSF" id="PIRSF000412">
    <property type="entry name" value="SHMT"/>
    <property type="match status" value="1"/>
</dbReference>
<dbReference type="SUPFAM" id="SSF53383">
    <property type="entry name" value="PLP-dependent transferases"/>
    <property type="match status" value="1"/>
</dbReference>
<dbReference type="PROSITE" id="PS00096">
    <property type="entry name" value="SHMT"/>
    <property type="match status" value="1"/>
</dbReference>
<proteinExistence type="inferred from homology"/>
<accession>Q47WY2</accession>
<name>GLYA4_COLP3</name>
<comment type="function">
    <text evidence="1">Catalyzes the reversible interconversion of serine and glycine with tetrahydrofolate (THF) serving as the one-carbon carrier. This reaction serves as the major source of one-carbon groups required for the biosynthesis of purines, thymidylate, methionine, and other important biomolecules. Also exhibits THF-independent aldolase activity toward beta-hydroxyamino acids, producing glycine and aldehydes, via a retro-aldol mechanism.</text>
</comment>
<comment type="catalytic activity">
    <reaction evidence="1">
        <text>(6R)-5,10-methylene-5,6,7,8-tetrahydrofolate + glycine + H2O = (6S)-5,6,7,8-tetrahydrofolate + L-serine</text>
        <dbReference type="Rhea" id="RHEA:15481"/>
        <dbReference type="ChEBI" id="CHEBI:15377"/>
        <dbReference type="ChEBI" id="CHEBI:15636"/>
        <dbReference type="ChEBI" id="CHEBI:33384"/>
        <dbReference type="ChEBI" id="CHEBI:57305"/>
        <dbReference type="ChEBI" id="CHEBI:57453"/>
        <dbReference type="EC" id="2.1.2.1"/>
    </reaction>
</comment>
<comment type="cofactor">
    <cofactor evidence="1">
        <name>pyridoxal 5'-phosphate</name>
        <dbReference type="ChEBI" id="CHEBI:597326"/>
    </cofactor>
</comment>
<comment type="pathway">
    <text evidence="1">One-carbon metabolism; tetrahydrofolate interconversion.</text>
</comment>
<comment type="pathway">
    <text evidence="1">Amino-acid biosynthesis; glycine biosynthesis; glycine from L-serine: step 1/1.</text>
</comment>
<comment type="subunit">
    <text evidence="1">Homodimer.</text>
</comment>
<comment type="subcellular location">
    <subcellularLocation>
        <location evidence="1">Cytoplasm</location>
    </subcellularLocation>
</comment>
<comment type="similarity">
    <text evidence="1">Belongs to the SHMT family.</text>
</comment>
<protein>
    <recommendedName>
        <fullName evidence="1">Serine hydroxymethyltransferase 4</fullName>
        <shortName evidence="1">SHMT 4</shortName>
        <shortName evidence="1">Serine methylase 4</shortName>
        <ecNumber evidence="1">2.1.2.1</ecNumber>
    </recommendedName>
</protein>
<gene>
    <name evidence="1" type="primary">glyA4</name>
    <name type="ordered locus">CPS_4031</name>
</gene>
<sequence length="417" mass="45414">MFYKNDQIAGFDDSIWQAMEQEDKRQQDHVELIASENYTSARVMQAQGSQLTNKYAEGYPGKRYYGGCEHVDVIEQLAIDRAKELFGADYANVQPHSGSQANAAVFMALLKPGETVLGMSLAHGGHLTHGSKVSFSGKIYNAVQYGLNEVTGEIDYDEVARLAKEHQPKMIIAGFSAYSRVVDWQRFRDIADSIGAWLFVDMAHVAGLVAAGLYPNPVPIADVVTTTTHKTLRGPRGGLILAKQNDELAKKLNSAVFPAGQGGPLMHVIAAKAICFKEALGEGYVEYQQQVIDNAREMAKTFQTRGYNVVSGGTDNHLFLLDLIDKGITGKDADAALGRANITVNKNSVPNDPQSPFVTSGLRIGTPAITSRGFGLEEAAALTGWICDVLDDISNEQVIDDVRSKVLDLCEKNPVYR</sequence>
<organism>
    <name type="scientific">Colwellia psychrerythraea (strain 34H / ATCC BAA-681)</name>
    <name type="common">Vibrio psychroerythus</name>
    <dbReference type="NCBI Taxonomy" id="167879"/>
    <lineage>
        <taxon>Bacteria</taxon>
        <taxon>Pseudomonadati</taxon>
        <taxon>Pseudomonadota</taxon>
        <taxon>Gammaproteobacteria</taxon>
        <taxon>Alteromonadales</taxon>
        <taxon>Colwelliaceae</taxon>
        <taxon>Colwellia</taxon>
    </lineage>
</organism>
<keyword id="KW-0028">Amino-acid biosynthesis</keyword>
<keyword id="KW-0963">Cytoplasm</keyword>
<keyword id="KW-0554">One-carbon metabolism</keyword>
<keyword id="KW-0663">Pyridoxal phosphate</keyword>
<keyword id="KW-0808">Transferase</keyword>
<feature type="chain" id="PRO_0000234970" description="Serine hydroxymethyltransferase 4">
    <location>
        <begin position="1"/>
        <end position="417"/>
    </location>
</feature>
<feature type="binding site" evidence="1">
    <location>
        <position position="121"/>
    </location>
    <ligand>
        <name>(6S)-5,6,7,8-tetrahydrofolate</name>
        <dbReference type="ChEBI" id="CHEBI:57453"/>
    </ligand>
</feature>
<feature type="binding site" evidence="1">
    <location>
        <begin position="125"/>
        <end position="127"/>
    </location>
    <ligand>
        <name>(6S)-5,6,7,8-tetrahydrofolate</name>
        <dbReference type="ChEBI" id="CHEBI:57453"/>
    </ligand>
</feature>
<feature type="binding site" evidence="1">
    <location>
        <begin position="355"/>
        <end position="357"/>
    </location>
    <ligand>
        <name>(6S)-5,6,7,8-tetrahydrofolate</name>
        <dbReference type="ChEBI" id="CHEBI:57453"/>
    </ligand>
</feature>
<feature type="site" description="Plays an important role in substrate specificity" evidence="1">
    <location>
        <position position="229"/>
    </location>
</feature>
<feature type="modified residue" description="N6-(pyridoxal phosphate)lysine" evidence="1">
    <location>
        <position position="230"/>
    </location>
</feature>